<protein>
    <recommendedName>
        <fullName evidence="1">DNA repair protein RecO</fullName>
    </recommendedName>
    <alternativeName>
        <fullName evidence="1">Recombination protein O</fullName>
    </alternativeName>
</protein>
<gene>
    <name evidence="1" type="primary">recO</name>
    <name type="ordered locus">Ecok1_24910</name>
    <name type="ORF">APECO1_3966</name>
</gene>
<organism>
    <name type="scientific">Escherichia coli O1:K1 / APEC</name>
    <dbReference type="NCBI Taxonomy" id="405955"/>
    <lineage>
        <taxon>Bacteria</taxon>
        <taxon>Pseudomonadati</taxon>
        <taxon>Pseudomonadota</taxon>
        <taxon>Gammaproteobacteria</taxon>
        <taxon>Enterobacterales</taxon>
        <taxon>Enterobacteriaceae</taxon>
        <taxon>Escherichia</taxon>
    </lineage>
</organism>
<evidence type="ECO:0000255" key="1">
    <source>
        <dbReference type="HAMAP-Rule" id="MF_00201"/>
    </source>
</evidence>
<feature type="chain" id="PRO_1000012127" description="DNA repair protein RecO">
    <location>
        <begin position="1"/>
        <end position="242"/>
    </location>
</feature>
<proteinExistence type="inferred from homology"/>
<comment type="function">
    <text evidence="1">Involved in DNA repair and RecF pathway recombination.</text>
</comment>
<comment type="subunit">
    <text evidence="1">Monomer.</text>
</comment>
<comment type="similarity">
    <text evidence="1">Belongs to the RecO family.</text>
</comment>
<name>RECO_ECOK1</name>
<keyword id="KW-0227">DNA damage</keyword>
<keyword id="KW-0233">DNA recombination</keyword>
<keyword id="KW-0234">DNA repair</keyword>
<keyword id="KW-1185">Reference proteome</keyword>
<dbReference type="EMBL" id="CP000468">
    <property type="protein sequence ID" value="ABJ01985.1"/>
    <property type="molecule type" value="Genomic_DNA"/>
</dbReference>
<dbReference type="RefSeq" id="WP_000399404.1">
    <property type="nucleotide sequence ID" value="NZ_CADILS010000012.1"/>
</dbReference>
<dbReference type="SMR" id="A1AE95"/>
<dbReference type="KEGG" id="ecv:APECO1_3966"/>
<dbReference type="HOGENOM" id="CLU_066645_1_0_6"/>
<dbReference type="Proteomes" id="UP000008216">
    <property type="component" value="Chromosome"/>
</dbReference>
<dbReference type="GO" id="GO:0043590">
    <property type="term" value="C:bacterial nucleoid"/>
    <property type="evidence" value="ECO:0007669"/>
    <property type="project" value="TreeGrafter"/>
</dbReference>
<dbReference type="GO" id="GO:0006310">
    <property type="term" value="P:DNA recombination"/>
    <property type="evidence" value="ECO:0007669"/>
    <property type="project" value="UniProtKB-UniRule"/>
</dbReference>
<dbReference type="GO" id="GO:0006302">
    <property type="term" value="P:double-strand break repair"/>
    <property type="evidence" value="ECO:0007669"/>
    <property type="project" value="TreeGrafter"/>
</dbReference>
<dbReference type="FunFam" id="1.20.1440.120:FF:000001">
    <property type="entry name" value="DNA repair protein RecO"/>
    <property type="match status" value="1"/>
</dbReference>
<dbReference type="FunFam" id="2.40.50.140:FF:000074">
    <property type="entry name" value="DNA repair protein RecO"/>
    <property type="match status" value="1"/>
</dbReference>
<dbReference type="Gene3D" id="2.40.50.140">
    <property type="entry name" value="Nucleic acid-binding proteins"/>
    <property type="match status" value="1"/>
</dbReference>
<dbReference type="Gene3D" id="1.20.1440.120">
    <property type="entry name" value="Recombination protein O, C-terminal domain"/>
    <property type="match status" value="1"/>
</dbReference>
<dbReference type="HAMAP" id="MF_00201">
    <property type="entry name" value="RecO"/>
    <property type="match status" value="1"/>
</dbReference>
<dbReference type="InterPro" id="IPR037278">
    <property type="entry name" value="ARFGAP/RecO"/>
</dbReference>
<dbReference type="InterPro" id="IPR022572">
    <property type="entry name" value="DNA_rep/recomb_RecO_N"/>
</dbReference>
<dbReference type="InterPro" id="IPR012340">
    <property type="entry name" value="NA-bd_OB-fold"/>
</dbReference>
<dbReference type="InterPro" id="IPR003717">
    <property type="entry name" value="RecO"/>
</dbReference>
<dbReference type="InterPro" id="IPR042242">
    <property type="entry name" value="RecO_C"/>
</dbReference>
<dbReference type="NCBIfam" id="TIGR00613">
    <property type="entry name" value="reco"/>
    <property type="match status" value="1"/>
</dbReference>
<dbReference type="PANTHER" id="PTHR33991">
    <property type="entry name" value="DNA REPAIR PROTEIN RECO"/>
    <property type="match status" value="1"/>
</dbReference>
<dbReference type="PANTHER" id="PTHR33991:SF1">
    <property type="entry name" value="DNA REPAIR PROTEIN RECO"/>
    <property type="match status" value="1"/>
</dbReference>
<dbReference type="Pfam" id="PF02565">
    <property type="entry name" value="RecO_C"/>
    <property type="match status" value="1"/>
</dbReference>
<dbReference type="Pfam" id="PF11967">
    <property type="entry name" value="RecO_N"/>
    <property type="match status" value="1"/>
</dbReference>
<dbReference type="SUPFAM" id="SSF57863">
    <property type="entry name" value="ArfGap/RecO-like zinc finger"/>
    <property type="match status" value="1"/>
</dbReference>
<dbReference type="SUPFAM" id="SSF50249">
    <property type="entry name" value="Nucleic acid-binding proteins"/>
    <property type="match status" value="1"/>
</dbReference>
<reference key="1">
    <citation type="journal article" date="2007" name="J. Bacteriol.">
        <title>The genome sequence of avian pathogenic Escherichia coli strain O1:K1:H7 shares strong similarities with human extraintestinal pathogenic E. coli genomes.</title>
        <authorList>
            <person name="Johnson T.J."/>
            <person name="Kariyawasam S."/>
            <person name="Wannemuehler Y."/>
            <person name="Mangiamele P."/>
            <person name="Johnson S.J."/>
            <person name="Doetkott C."/>
            <person name="Skyberg J.A."/>
            <person name="Lynne A.M."/>
            <person name="Johnson J.R."/>
            <person name="Nolan L.K."/>
        </authorList>
    </citation>
    <scope>NUCLEOTIDE SEQUENCE [LARGE SCALE GENOMIC DNA]</scope>
</reference>
<sequence length="242" mass="27391">MEGWQRAFVLHSRPWSETSLMLDVFTEESGRVRLVAKGARSKRSTLKGALQPFTPLLLRFGGRGEVKTLRSAEAVSLALPLSGITLYSGLYINELLSRVLEYETRFSELFFDYLHCIQSLAGVTGTPEPALRRFELALLGHLGYGVNFTHCAGSGEPVDDTMTYRYREEKGFIASVVIDNKTFTGRQLKALNAREFPDADTLRAAKRFTRMALKPYLGGKPLKSRELFRQFMPKRTVKTHYE</sequence>
<accession>A1AE95</accession>